<name>SYT_STACT</name>
<accession>B9DNC9</accession>
<proteinExistence type="inferred from homology"/>
<organism>
    <name type="scientific">Staphylococcus carnosus (strain TM300)</name>
    <dbReference type="NCBI Taxonomy" id="396513"/>
    <lineage>
        <taxon>Bacteria</taxon>
        <taxon>Bacillati</taxon>
        <taxon>Bacillota</taxon>
        <taxon>Bacilli</taxon>
        <taxon>Bacillales</taxon>
        <taxon>Staphylococcaceae</taxon>
        <taxon>Staphylococcus</taxon>
    </lineage>
</organism>
<feature type="chain" id="PRO_1000199568" description="Threonine--tRNA ligase">
    <location>
        <begin position="1"/>
        <end position="647"/>
    </location>
</feature>
<feature type="domain" description="TGS" evidence="2">
    <location>
        <begin position="1"/>
        <end position="63"/>
    </location>
</feature>
<feature type="region of interest" description="Catalytic" evidence="1">
    <location>
        <begin position="242"/>
        <end position="540"/>
    </location>
</feature>
<feature type="binding site" evidence="1">
    <location>
        <position position="336"/>
    </location>
    <ligand>
        <name>Zn(2+)</name>
        <dbReference type="ChEBI" id="CHEBI:29105"/>
    </ligand>
</feature>
<feature type="binding site" evidence="1">
    <location>
        <position position="387"/>
    </location>
    <ligand>
        <name>Zn(2+)</name>
        <dbReference type="ChEBI" id="CHEBI:29105"/>
    </ligand>
</feature>
<feature type="binding site" evidence="1">
    <location>
        <position position="517"/>
    </location>
    <ligand>
        <name>Zn(2+)</name>
        <dbReference type="ChEBI" id="CHEBI:29105"/>
    </ligand>
</feature>
<gene>
    <name evidence="1" type="primary">thrS</name>
    <name type="ordered locus">Sca_1289</name>
</gene>
<protein>
    <recommendedName>
        <fullName evidence="1">Threonine--tRNA ligase</fullName>
        <ecNumber evidence="1">6.1.1.3</ecNumber>
    </recommendedName>
    <alternativeName>
        <fullName evidence="1">Threonyl-tRNA synthetase</fullName>
        <shortName evidence="1">ThrRS</shortName>
    </alternativeName>
</protein>
<sequence>MDKINITFPDGNSTEFDKGITTEEIAQSISPGLRKKAVAGKFNDKMVDLTRPLEEDGSIEIVTPGSDEALEVLRHSTAHLMAQALKRLYGDVKFGVGPVIDGGFYYDFDTDVKISSDDFPEIEKTMKQIVNENYKIERKVVSREEAKEFFKDDPYKLELIDAIPEDESVTLYSQGEFTDLCRGVHVPSTSKIKEFKLLSTAGAYWRGDSNNKMLQRIYGTAFFDKKDLKAHLKMLEERKERDHRKIGKELDLFMNSQLVGAGLPLWLPNGATIRREIERYIVDKEVALGYDHVYTPVMANVELYKTSGHWDHYQDDMFPPMKLDETEEMVLRPMNCPHHMMIYKNKPHSYRELPIRIAELGTMHRYEASGAVSGLQRVRGMTLNDSHIFVRPDQIKEEFKRVVELILDVYEDFGFENYSFRLSYRDPEDKEKYFDDDEMWERAESMLKEAVDEMGLPYEEAIGEAAFYGPKLDVQVKTAMGKEETLSTAQLDFLLPERFDLAYIGKDGEEHRPVVIHRGVVSTMERFVAFLTEETKGAFPTWLAPKQVEIIPVNVDLHYDYARQIQDELKSQGVRVEIDDRNEKMGYKIREAQMHKIPYQLVIGDKEIENNEVNVRKYGSKDQETVEKDEFIWNLVDEIRLKKQRQN</sequence>
<reference key="1">
    <citation type="journal article" date="2009" name="Appl. Environ. Microbiol.">
        <title>Genome analysis of the meat starter culture bacterium Staphylococcus carnosus TM300.</title>
        <authorList>
            <person name="Rosenstein R."/>
            <person name="Nerz C."/>
            <person name="Biswas L."/>
            <person name="Resch A."/>
            <person name="Raddatz G."/>
            <person name="Schuster S.C."/>
            <person name="Goetz F."/>
        </authorList>
    </citation>
    <scope>NUCLEOTIDE SEQUENCE [LARGE SCALE GENOMIC DNA]</scope>
    <source>
        <strain>TM300</strain>
    </source>
</reference>
<comment type="function">
    <text evidence="1">Catalyzes the attachment of threonine to tRNA(Thr) in a two-step reaction: L-threonine is first activated by ATP to form Thr-AMP and then transferred to the acceptor end of tRNA(Thr). Also edits incorrectly charged L-seryl-tRNA(Thr).</text>
</comment>
<comment type="catalytic activity">
    <reaction evidence="1">
        <text>tRNA(Thr) + L-threonine + ATP = L-threonyl-tRNA(Thr) + AMP + diphosphate + H(+)</text>
        <dbReference type="Rhea" id="RHEA:24624"/>
        <dbReference type="Rhea" id="RHEA-COMP:9670"/>
        <dbReference type="Rhea" id="RHEA-COMP:9704"/>
        <dbReference type="ChEBI" id="CHEBI:15378"/>
        <dbReference type="ChEBI" id="CHEBI:30616"/>
        <dbReference type="ChEBI" id="CHEBI:33019"/>
        <dbReference type="ChEBI" id="CHEBI:57926"/>
        <dbReference type="ChEBI" id="CHEBI:78442"/>
        <dbReference type="ChEBI" id="CHEBI:78534"/>
        <dbReference type="ChEBI" id="CHEBI:456215"/>
        <dbReference type="EC" id="6.1.1.3"/>
    </reaction>
</comment>
<comment type="cofactor">
    <cofactor evidence="1">
        <name>Zn(2+)</name>
        <dbReference type="ChEBI" id="CHEBI:29105"/>
    </cofactor>
    <text evidence="1">Binds 1 zinc ion per subunit.</text>
</comment>
<comment type="subunit">
    <text evidence="1">Homodimer.</text>
</comment>
<comment type="subcellular location">
    <subcellularLocation>
        <location evidence="1">Cytoplasm</location>
    </subcellularLocation>
</comment>
<comment type="similarity">
    <text evidence="1">Belongs to the class-II aminoacyl-tRNA synthetase family.</text>
</comment>
<evidence type="ECO:0000255" key="1">
    <source>
        <dbReference type="HAMAP-Rule" id="MF_00184"/>
    </source>
</evidence>
<evidence type="ECO:0000255" key="2">
    <source>
        <dbReference type="PROSITE-ProRule" id="PRU01228"/>
    </source>
</evidence>
<keyword id="KW-0030">Aminoacyl-tRNA synthetase</keyword>
<keyword id="KW-0067">ATP-binding</keyword>
<keyword id="KW-0963">Cytoplasm</keyword>
<keyword id="KW-0436">Ligase</keyword>
<keyword id="KW-0479">Metal-binding</keyword>
<keyword id="KW-0547">Nucleotide-binding</keyword>
<keyword id="KW-0648">Protein biosynthesis</keyword>
<keyword id="KW-1185">Reference proteome</keyword>
<keyword id="KW-0694">RNA-binding</keyword>
<keyword id="KW-0820">tRNA-binding</keyword>
<keyword id="KW-0862">Zinc</keyword>
<dbReference type="EC" id="6.1.1.3" evidence="1"/>
<dbReference type="EMBL" id="AM295250">
    <property type="protein sequence ID" value="CAL28195.1"/>
    <property type="molecule type" value="Genomic_DNA"/>
</dbReference>
<dbReference type="RefSeq" id="WP_015900535.1">
    <property type="nucleotide sequence ID" value="NC_012121.1"/>
</dbReference>
<dbReference type="SMR" id="B9DNC9"/>
<dbReference type="GeneID" id="93793712"/>
<dbReference type="KEGG" id="sca:SCA_1289"/>
<dbReference type="eggNOG" id="COG0441">
    <property type="taxonomic scope" value="Bacteria"/>
</dbReference>
<dbReference type="HOGENOM" id="CLU_008554_0_1_9"/>
<dbReference type="OrthoDB" id="9802304at2"/>
<dbReference type="BioCyc" id="SCAR396513:SCA_RS06425-MONOMER"/>
<dbReference type="Proteomes" id="UP000000444">
    <property type="component" value="Chromosome"/>
</dbReference>
<dbReference type="GO" id="GO:0005737">
    <property type="term" value="C:cytoplasm"/>
    <property type="evidence" value="ECO:0007669"/>
    <property type="project" value="UniProtKB-SubCell"/>
</dbReference>
<dbReference type="GO" id="GO:0005524">
    <property type="term" value="F:ATP binding"/>
    <property type="evidence" value="ECO:0007669"/>
    <property type="project" value="UniProtKB-UniRule"/>
</dbReference>
<dbReference type="GO" id="GO:0140096">
    <property type="term" value="F:catalytic activity, acting on a protein"/>
    <property type="evidence" value="ECO:0007669"/>
    <property type="project" value="UniProtKB-ARBA"/>
</dbReference>
<dbReference type="GO" id="GO:0046872">
    <property type="term" value="F:metal ion binding"/>
    <property type="evidence" value="ECO:0007669"/>
    <property type="project" value="UniProtKB-KW"/>
</dbReference>
<dbReference type="GO" id="GO:0004829">
    <property type="term" value="F:threonine-tRNA ligase activity"/>
    <property type="evidence" value="ECO:0007669"/>
    <property type="project" value="UniProtKB-UniRule"/>
</dbReference>
<dbReference type="GO" id="GO:0016740">
    <property type="term" value="F:transferase activity"/>
    <property type="evidence" value="ECO:0007669"/>
    <property type="project" value="UniProtKB-ARBA"/>
</dbReference>
<dbReference type="GO" id="GO:0000049">
    <property type="term" value="F:tRNA binding"/>
    <property type="evidence" value="ECO:0007669"/>
    <property type="project" value="UniProtKB-KW"/>
</dbReference>
<dbReference type="GO" id="GO:0006435">
    <property type="term" value="P:threonyl-tRNA aminoacylation"/>
    <property type="evidence" value="ECO:0007669"/>
    <property type="project" value="UniProtKB-UniRule"/>
</dbReference>
<dbReference type="CDD" id="cd01667">
    <property type="entry name" value="TGS_ThrRS"/>
    <property type="match status" value="1"/>
</dbReference>
<dbReference type="CDD" id="cd00860">
    <property type="entry name" value="ThrRS_anticodon"/>
    <property type="match status" value="1"/>
</dbReference>
<dbReference type="CDD" id="cd00771">
    <property type="entry name" value="ThrRS_core"/>
    <property type="match status" value="1"/>
</dbReference>
<dbReference type="FunFam" id="3.10.20.30:FF:000005">
    <property type="entry name" value="Threonine--tRNA ligase"/>
    <property type="match status" value="1"/>
</dbReference>
<dbReference type="FunFam" id="3.30.930.10:FF:000002">
    <property type="entry name" value="Threonine--tRNA ligase"/>
    <property type="match status" value="1"/>
</dbReference>
<dbReference type="FunFam" id="3.40.50.800:FF:000001">
    <property type="entry name" value="Threonine--tRNA ligase"/>
    <property type="match status" value="1"/>
</dbReference>
<dbReference type="FunFam" id="3.30.980.10:FF:000005">
    <property type="entry name" value="Threonyl-tRNA synthetase, mitochondrial"/>
    <property type="match status" value="1"/>
</dbReference>
<dbReference type="Gene3D" id="3.10.20.30">
    <property type="match status" value="1"/>
</dbReference>
<dbReference type="Gene3D" id="3.40.50.800">
    <property type="entry name" value="Anticodon-binding domain"/>
    <property type="match status" value="1"/>
</dbReference>
<dbReference type="Gene3D" id="3.30.930.10">
    <property type="entry name" value="Bira Bifunctional Protein, Domain 2"/>
    <property type="match status" value="1"/>
</dbReference>
<dbReference type="Gene3D" id="3.30.980.10">
    <property type="entry name" value="Threonyl-trna Synthetase, Chain A, domain 2"/>
    <property type="match status" value="1"/>
</dbReference>
<dbReference type="HAMAP" id="MF_00184">
    <property type="entry name" value="Thr_tRNA_synth"/>
    <property type="match status" value="1"/>
</dbReference>
<dbReference type="InterPro" id="IPR002314">
    <property type="entry name" value="aa-tRNA-synt_IIb"/>
</dbReference>
<dbReference type="InterPro" id="IPR006195">
    <property type="entry name" value="aa-tRNA-synth_II"/>
</dbReference>
<dbReference type="InterPro" id="IPR045864">
    <property type="entry name" value="aa-tRNA-synth_II/BPL/LPL"/>
</dbReference>
<dbReference type="InterPro" id="IPR004154">
    <property type="entry name" value="Anticodon-bd"/>
</dbReference>
<dbReference type="InterPro" id="IPR036621">
    <property type="entry name" value="Anticodon-bd_dom_sf"/>
</dbReference>
<dbReference type="InterPro" id="IPR012675">
    <property type="entry name" value="Beta-grasp_dom_sf"/>
</dbReference>
<dbReference type="InterPro" id="IPR004095">
    <property type="entry name" value="TGS"/>
</dbReference>
<dbReference type="InterPro" id="IPR012676">
    <property type="entry name" value="TGS-like"/>
</dbReference>
<dbReference type="InterPro" id="IPR002320">
    <property type="entry name" value="Thr-tRNA-ligase_IIa"/>
</dbReference>
<dbReference type="InterPro" id="IPR018163">
    <property type="entry name" value="Thr/Ala-tRNA-synth_IIc_edit"/>
</dbReference>
<dbReference type="InterPro" id="IPR047246">
    <property type="entry name" value="ThrRS_anticodon"/>
</dbReference>
<dbReference type="InterPro" id="IPR033728">
    <property type="entry name" value="ThrRS_core"/>
</dbReference>
<dbReference type="InterPro" id="IPR012947">
    <property type="entry name" value="tRNA_SAD"/>
</dbReference>
<dbReference type="NCBIfam" id="TIGR00418">
    <property type="entry name" value="thrS"/>
    <property type="match status" value="1"/>
</dbReference>
<dbReference type="PANTHER" id="PTHR11451:SF56">
    <property type="entry name" value="THREONINE--TRNA LIGASE 1"/>
    <property type="match status" value="1"/>
</dbReference>
<dbReference type="PANTHER" id="PTHR11451">
    <property type="entry name" value="THREONINE-TRNA LIGASE"/>
    <property type="match status" value="1"/>
</dbReference>
<dbReference type="Pfam" id="PF03129">
    <property type="entry name" value="HGTP_anticodon"/>
    <property type="match status" value="1"/>
</dbReference>
<dbReference type="Pfam" id="PF02824">
    <property type="entry name" value="TGS"/>
    <property type="match status" value="1"/>
</dbReference>
<dbReference type="Pfam" id="PF00587">
    <property type="entry name" value="tRNA-synt_2b"/>
    <property type="match status" value="1"/>
</dbReference>
<dbReference type="Pfam" id="PF07973">
    <property type="entry name" value="tRNA_SAD"/>
    <property type="match status" value="1"/>
</dbReference>
<dbReference type="PRINTS" id="PR01047">
    <property type="entry name" value="TRNASYNTHTHR"/>
</dbReference>
<dbReference type="SMART" id="SM00863">
    <property type="entry name" value="tRNA_SAD"/>
    <property type="match status" value="1"/>
</dbReference>
<dbReference type="SUPFAM" id="SSF52954">
    <property type="entry name" value="Class II aaRS ABD-related"/>
    <property type="match status" value="1"/>
</dbReference>
<dbReference type="SUPFAM" id="SSF55681">
    <property type="entry name" value="Class II aaRS and biotin synthetases"/>
    <property type="match status" value="1"/>
</dbReference>
<dbReference type="SUPFAM" id="SSF81271">
    <property type="entry name" value="TGS-like"/>
    <property type="match status" value="1"/>
</dbReference>
<dbReference type="SUPFAM" id="SSF55186">
    <property type="entry name" value="ThrRS/AlaRS common domain"/>
    <property type="match status" value="1"/>
</dbReference>
<dbReference type="PROSITE" id="PS50862">
    <property type="entry name" value="AA_TRNA_LIGASE_II"/>
    <property type="match status" value="1"/>
</dbReference>
<dbReference type="PROSITE" id="PS51880">
    <property type="entry name" value="TGS"/>
    <property type="match status" value="1"/>
</dbReference>